<protein>
    <recommendedName>
        <fullName evidence="1">Large ribosomal subunit protein bL28</fullName>
    </recommendedName>
    <alternativeName>
        <fullName evidence="2">50S ribosomal protein L28</fullName>
    </alternativeName>
</protein>
<dbReference type="EMBL" id="CP000576">
    <property type="protein sequence ID" value="ABO17580.1"/>
    <property type="molecule type" value="Genomic_DNA"/>
</dbReference>
<dbReference type="RefSeq" id="WP_011862928.1">
    <property type="nucleotide sequence ID" value="NC_009091.1"/>
</dbReference>
<dbReference type="SMR" id="A3PCV5"/>
<dbReference type="STRING" id="167546.P9301_09571"/>
<dbReference type="KEGG" id="pmg:P9301_09571"/>
<dbReference type="eggNOG" id="COG0227">
    <property type="taxonomic scope" value="Bacteria"/>
</dbReference>
<dbReference type="HOGENOM" id="CLU_064548_3_0_3"/>
<dbReference type="OrthoDB" id="9805609at2"/>
<dbReference type="Proteomes" id="UP000001430">
    <property type="component" value="Chromosome"/>
</dbReference>
<dbReference type="GO" id="GO:1990904">
    <property type="term" value="C:ribonucleoprotein complex"/>
    <property type="evidence" value="ECO:0007669"/>
    <property type="project" value="UniProtKB-KW"/>
</dbReference>
<dbReference type="GO" id="GO:0005840">
    <property type="term" value="C:ribosome"/>
    <property type="evidence" value="ECO:0007669"/>
    <property type="project" value="UniProtKB-KW"/>
</dbReference>
<dbReference type="GO" id="GO:0003735">
    <property type="term" value="F:structural constituent of ribosome"/>
    <property type="evidence" value="ECO:0007669"/>
    <property type="project" value="InterPro"/>
</dbReference>
<dbReference type="GO" id="GO:0006412">
    <property type="term" value="P:translation"/>
    <property type="evidence" value="ECO:0007669"/>
    <property type="project" value="UniProtKB-UniRule"/>
</dbReference>
<dbReference type="Gene3D" id="2.30.170.40">
    <property type="entry name" value="Ribosomal protein L28/L24"/>
    <property type="match status" value="1"/>
</dbReference>
<dbReference type="HAMAP" id="MF_00373">
    <property type="entry name" value="Ribosomal_bL28"/>
    <property type="match status" value="1"/>
</dbReference>
<dbReference type="InterPro" id="IPR026569">
    <property type="entry name" value="Ribosomal_bL28"/>
</dbReference>
<dbReference type="InterPro" id="IPR034704">
    <property type="entry name" value="Ribosomal_bL28/bL31-like_sf"/>
</dbReference>
<dbReference type="InterPro" id="IPR001383">
    <property type="entry name" value="Ribosomal_bL28_bact-type"/>
</dbReference>
<dbReference type="InterPro" id="IPR037147">
    <property type="entry name" value="Ribosomal_bL28_sf"/>
</dbReference>
<dbReference type="NCBIfam" id="TIGR00009">
    <property type="entry name" value="L28"/>
    <property type="match status" value="1"/>
</dbReference>
<dbReference type="PANTHER" id="PTHR13528">
    <property type="entry name" value="39S RIBOSOMAL PROTEIN L28, MITOCHONDRIAL"/>
    <property type="match status" value="1"/>
</dbReference>
<dbReference type="PANTHER" id="PTHR13528:SF2">
    <property type="entry name" value="LARGE RIBOSOMAL SUBUNIT PROTEIN BL28M"/>
    <property type="match status" value="1"/>
</dbReference>
<dbReference type="Pfam" id="PF00830">
    <property type="entry name" value="Ribosomal_L28"/>
    <property type="match status" value="1"/>
</dbReference>
<dbReference type="SUPFAM" id="SSF143800">
    <property type="entry name" value="L28p-like"/>
    <property type="match status" value="1"/>
</dbReference>
<comment type="similarity">
    <text evidence="1">Belongs to the bacterial ribosomal protein bL28 family.</text>
</comment>
<feature type="chain" id="PRO_1000007302" description="Large ribosomal subunit protein bL28">
    <location>
        <begin position="1"/>
        <end position="78"/>
    </location>
</feature>
<evidence type="ECO:0000255" key="1">
    <source>
        <dbReference type="HAMAP-Rule" id="MF_00373"/>
    </source>
</evidence>
<evidence type="ECO:0000305" key="2"/>
<keyword id="KW-1185">Reference proteome</keyword>
<keyword id="KW-0687">Ribonucleoprotein</keyword>
<keyword id="KW-0689">Ribosomal protein</keyword>
<sequence length="78" mass="8922">MSRVCELTGAKANNGMAVSHSHIRTKKLQQVNLQKRRLWWEEGKKWVNIKISTKALKSIQKVGLDKFAKSNGVDLNKF</sequence>
<proteinExistence type="inferred from homology"/>
<name>RL28_PROM0</name>
<accession>A3PCV5</accession>
<reference key="1">
    <citation type="journal article" date="2007" name="PLoS Genet.">
        <title>Patterns and implications of gene gain and loss in the evolution of Prochlorococcus.</title>
        <authorList>
            <person name="Kettler G.C."/>
            <person name="Martiny A.C."/>
            <person name="Huang K."/>
            <person name="Zucker J."/>
            <person name="Coleman M.L."/>
            <person name="Rodrigue S."/>
            <person name="Chen F."/>
            <person name="Lapidus A."/>
            <person name="Ferriera S."/>
            <person name="Johnson J."/>
            <person name="Steglich C."/>
            <person name="Church G.M."/>
            <person name="Richardson P."/>
            <person name="Chisholm S.W."/>
        </authorList>
    </citation>
    <scope>NUCLEOTIDE SEQUENCE [LARGE SCALE GENOMIC DNA]</scope>
    <source>
        <strain>MIT 9301</strain>
    </source>
</reference>
<gene>
    <name evidence="1" type="primary">rpmB</name>
    <name evidence="1" type="synonym">rpl28</name>
    <name type="ordered locus">P9301_09571</name>
</gene>
<organism>
    <name type="scientific">Prochlorococcus marinus (strain MIT 9301)</name>
    <dbReference type="NCBI Taxonomy" id="167546"/>
    <lineage>
        <taxon>Bacteria</taxon>
        <taxon>Bacillati</taxon>
        <taxon>Cyanobacteriota</taxon>
        <taxon>Cyanophyceae</taxon>
        <taxon>Synechococcales</taxon>
        <taxon>Prochlorococcaceae</taxon>
        <taxon>Prochlorococcus</taxon>
    </lineage>
</organism>